<organism>
    <name type="scientific">Arabidopsis thaliana</name>
    <name type="common">Mouse-ear cress</name>
    <dbReference type="NCBI Taxonomy" id="3702"/>
    <lineage>
        <taxon>Eukaryota</taxon>
        <taxon>Viridiplantae</taxon>
        <taxon>Streptophyta</taxon>
        <taxon>Embryophyta</taxon>
        <taxon>Tracheophyta</taxon>
        <taxon>Spermatophyta</taxon>
        <taxon>Magnoliopsida</taxon>
        <taxon>eudicotyledons</taxon>
        <taxon>Gunneridae</taxon>
        <taxon>Pentapetalae</taxon>
        <taxon>rosids</taxon>
        <taxon>malvids</taxon>
        <taxon>Brassicales</taxon>
        <taxon>Brassicaceae</taxon>
        <taxon>Camelineae</taxon>
        <taxon>Arabidopsis</taxon>
    </lineage>
</organism>
<accession>Q9SZ46</accession>
<gene>
    <name evidence="8" type="primary">CYP82C4</name>
    <name evidence="12" type="ordered locus">At4g31940</name>
    <name evidence="13" type="ORF">F10N7.250</name>
</gene>
<protein>
    <recommendedName>
        <fullName evidence="10">Xanthotoxin 5-hydroxylase CYP82C4</fullName>
        <shortName evidence="7">8-methoxypsoralen 5-hydroxylase CYP82C4</shortName>
        <ecNumber evidence="4">1.14.14.-</ecNumber>
    </recommendedName>
    <alternativeName>
        <fullName evidence="8">Cytochrome P450 82C4</fullName>
    </alternativeName>
    <alternativeName>
        <fullName evidence="11">Fraxetin 5-hydroxylase CYP82C4</fullName>
        <ecNumber evidence="6">1.14.14.164</ecNumber>
    </alternativeName>
</protein>
<feature type="chain" id="PRO_0000411199" description="Xanthotoxin 5-hydroxylase CYP82C4">
    <location>
        <begin position="1"/>
        <end position="524"/>
    </location>
</feature>
<feature type="transmembrane region" description="Helical" evidence="3">
    <location>
        <begin position="1"/>
        <end position="21"/>
    </location>
</feature>
<feature type="binding site" description="axial binding residue" evidence="2">
    <location>
        <position position="463"/>
    </location>
    <ligand>
        <name>heme</name>
        <dbReference type="ChEBI" id="CHEBI:30413"/>
    </ligand>
    <ligandPart>
        <name>Fe</name>
        <dbReference type="ChEBI" id="CHEBI:18248"/>
    </ligandPart>
</feature>
<reference key="1">
    <citation type="journal article" date="1999" name="Nature">
        <title>Sequence and analysis of chromosome 4 of the plant Arabidopsis thaliana.</title>
        <authorList>
            <person name="Mayer K.F.X."/>
            <person name="Schueller C."/>
            <person name="Wambutt R."/>
            <person name="Murphy G."/>
            <person name="Volckaert G."/>
            <person name="Pohl T."/>
            <person name="Duesterhoeft A."/>
            <person name="Stiekema W."/>
            <person name="Entian K.-D."/>
            <person name="Terryn N."/>
            <person name="Harris B."/>
            <person name="Ansorge W."/>
            <person name="Brandt P."/>
            <person name="Grivell L.A."/>
            <person name="Rieger M."/>
            <person name="Weichselgartner M."/>
            <person name="de Simone V."/>
            <person name="Obermaier B."/>
            <person name="Mache R."/>
            <person name="Mueller M."/>
            <person name="Kreis M."/>
            <person name="Delseny M."/>
            <person name="Puigdomenech P."/>
            <person name="Watson M."/>
            <person name="Schmidtheini T."/>
            <person name="Reichert B."/>
            <person name="Portetelle D."/>
            <person name="Perez-Alonso M."/>
            <person name="Boutry M."/>
            <person name="Bancroft I."/>
            <person name="Vos P."/>
            <person name="Hoheisel J."/>
            <person name="Zimmermann W."/>
            <person name="Wedler H."/>
            <person name="Ridley P."/>
            <person name="Langham S.-A."/>
            <person name="McCullagh B."/>
            <person name="Bilham L."/>
            <person name="Robben J."/>
            <person name="van der Schueren J."/>
            <person name="Grymonprez B."/>
            <person name="Chuang Y.-J."/>
            <person name="Vandenbussche F."/>
            <person name="Braeken M."/>
            <person name="Weltjens I."/>
            <person name="Voet M."/>
            <person name="Bastiaens I."/>
            <person name="Aert R."/>
            <person name="Defoor E."/>
            <person name="Weitzenegger T."/>
            <person name="Bothe G."/>
            <person name="Ramsperger U."/>
            <person name="Hilbert H."/>
            <person name="Braun M."/>
            <person name="Holzer E."/>
            <person name="Brandt A."/>
            <person name="Peters S."/>
            <person name="van Staveren M."/>
            <person name="Dirkse W."/>
            <person name="Mooijman P."/>
            <person name="Klein Lankhorst R."/>
            <person name="Rose M."/>
            <person name="Hauf J."/>
            <person name="Koetter P."/>
            <person name="Berneiser S."/>
            <person name="Hempel S."/>
            <person name="Feldpausch M."/>
            <person name="Lamberth S."/>
            <person name="Van den Daele H."/>
            <person name="De Keyser A."/>
            <person name="Buysshaert C."/>
            <person name="Gielen J."/>
            <person name="Villarroel R."/>
            <person name="De Clercq R."/>
            <person name="van Montagu M."/>
            <person name="Rogers J."/>
            <person name="Cronin A."/>
            <person name="Quail M.A."/>
            <person name="Bray-Allen S."/>
            <person name="Clark L."/>
            <person name="Doggett J."/>
            <person name="Hall S."/>
            <person name="Kay M."/>
            <person name="Lennard N."/>
            <person name="McLay K."/>
            <person name="Mayes R."/>
            <person name="Pettett A."/>
            <person name="Rajandream M.A."/>
            <person name="Lyne M."/>
            <person name="Benes V."/>
            <person name="Rechmann S."/>
            <person name="Borkova D."/>
            <person name="Bloecker H."/>
            <person name="Scharfe M."/>
            <person name="Grimm M."/>
            <person name="Loehnert T.-H."/>
            <person name="Dose S."/>
            <person name="de Haan M."/>
            <person name="Maarse A.C."/>
            <person name="Schaefer M."/>
            <person name="Mueller-Auer S."/>
            <person name="Gabel C."/>
            <person name="Fuchs M."/>
            <person name="Fartmann B."/>
            <person name="Granderath K."/>
            <person name="Dauner D."/>
            <person name="Herzl A."/>
            <person name="Neumann S."/>
            <person name="Argiriou A."/>
            <person name="Vitale D."/>
            <person name="Liguori R."/>
            <person name="Piravandi E."/>
            <person name="Massenet O."/>
            <person name="Quigley F."/>
            <person name="Clabauld G."/>
            <person name="Muendlein A."/>
            <person name="Felber R."/>
            <person name="Schnabl S."/>
            <person name="Hiller R."/>
            <person name="Schmidt W."/>
            <person name="Lecharny A."/>
            <person name="Aubourg S."/>
            <person name="Chefdor F."/>
            <person name="Cooke R."/>
            <person name="Berger C."/>
            <person name="Monfort A."/>
            <person name="Casacuberta E."/>
            <person name="Gibbons T."/>
            <person name="Weber N."/>
            <person name="Vandenbol M."/>
            <person name="Bargues M."/>
            <person name="Terol J."/>
            <person name="Torres A."/>
            <person name="Perez-Perez A."/>
            <person name="Purnelle B."/>
            <person name="Bent E."/>
            <person name="Johnson S."/>
            <person name="Tacon D."/>
            <person name="Jesse T."/>
            <person name="Heijnen L."/>
            <person name="Schwarz S."/>
            <person name="Scholler P."/>
            <person name="Heber S."/>
            <person name="Francs P."/>
            <person name="Bielke C."/>
            <person name="Frishman D."/>
            <person name="Haase D."/>
            <person name="Lemcke K."/>
            <person name="Mewes H.-W."/>
            <person name="Stocker S."/>
            <person name="Zaccaria P."/>
            <person name="Bevan M."/>
            <person name="Wilson R.K."/>
            <person name="de la Bastide M."/>
            <person name="Habermann K."/>
            <person name="Parnell L."/>
            <person name="Dedhia N."/>
            <person name="Gnoj L."/>
            <person name="Schutz K."/>
            <person name="Huang E."/>
            <person name="Spiegel L."/>
            <person name="Sekhon M."/>
            <person name="Murray J."/>
            <person name="Sheet P."/>
            <person name="Cordes M."/>
            <person name="Abu-Threideh J."/>
            <person name="Stoneking T."/>
            <person name="Kalicki J."/>
            <person name="Graves T."/>
            <person name="Harmon G."/>
            <person name="Edwards J."/>
            <person name="Latreille P."/>
            <person name="Courtney L."/>
            <person name="Cloud J."/>
            <person name="Abbott A."/>
            <person name="Scott K."/>
            <person name="Johnson D."/>
            <person name="Minx P."/>
            <person name="Bentley D."/>
            <person name="Fulton B."/>
            <person name="Miller N."/>
            <person name="Greco T."/>
            <person name="Kemp K."/>
            <person name="Kramer J."/>
            <person name="Fulton L."/>
            <person name="Mardis E."/>
            <person name="Dante M."/>
            <person name="Pepin K."/>
            <person name="Hillier L.W."/>
            <person name="Nelson J."/>
            <person name="Spieth J."/>
            <person name="Ryan E."/>
            <person name="Andrews S."/>
            <person name="Geisel C."/>
            <person name="Layman D."/>
            <person name="Du H."/>
            <person name="Ali J."/>
            <person name="Berghoff A."/>
            <person name="Jones K."/>
            <person name="Drone K."/>
            <person name="Cotton M."/>
            <person name="Joshu C."/>
            <person name="Antonoiu B."/>
            <person name="Zidanic M."/>
            <person name="Strong C."/>
            <person name="Sun H."/>
            <person name="Lamar B."/>
            <person name="Yordan C."/>
            <person name="Ma P."/>
            <person name="Zhong J."/>
            <person name="Preston R."/>
            <person name="Vil D."/>
            <person name="Shekher M."/>
            <person name="Matero A."/>
            <person name="Shah R."/>
            <person name="Swaby I.K."/>
            <person name="O'Shaughnessy A."/>
            <person name="Rodriguez M."/>
            <person name="Hoffman J."/>
            <person name="Till S."/>
            <person name="Granat S."/>
            <person name="Shohdy N."/>
            <person name="Hasegawa A."/>
            <person name="Hameed A."/>
            <person name="Lodhi M."/>
            <person name="Johnson A."/>
            <person name="Chen E."/>
            <person name="Marra M.A."/>
            <person name="Martienssen R."/>
            <person name="McCombie W.R."/>
        </authorList>
    </citation>
    <scope>NUCLEOTIDE SEQUENCE [LARGE SCALE GENOMIC DNA]</scope>
    <source>
        <strain>cv. Columbia</strain>
    </source>
</reference>
<reference key="2">
    <citation type="journal article" date="2017" name="Plant J.">
        <title>Araport11: a complete reannotation of the Arabidopsis thaliana reference genome.</title>
        <authorList>
            <person name="Cheng C.Y."/>
            <person name="Krishnakumar V."/>
            <person name="Chan A.P."/>
            <person name="Thibaud-Nissen F."/>
            <person name="Schobel S."/>
            <person name="Town C.D."/>
        </authorList>
    </citation>
    <scope>GENOME REANNOTATION</scope>
    <source>
        <strain>cv. Columbia</strain>
    </source>
</reference>
<reference key="3">
    <citation type="journal article" date="2003" name="Science">
        <title>Empirical analysis of transcriptional activity in the Arabidopsis genome.</title>
        <authorList>
            <person name="Yamada K."/>
            <person name="Lim J."/>
            <person name="Dale J.M."/>
            <person name="Chen H."/>
            <person name="Shinn P."/>
            <person name="Palm C.J."/>
            <person name="Southwick A.M."/>
            <person name="Wu H.C."/>
            <person name="Kim C.J."/>
            <person name="Nguyen M."/>
            <person name="Pham P.K."/>
            <person name="Cheuk R.F."/>
            <person name="Karlin-Newmann G."/>
            <person name="Liu S.X."/>
            <person name="Lam B."/>
            <person name="Sakano H."/>
            <person name="Wu T."/>
            <person name="Yu G."/>
            <person name="Miranda M."/>
            <person name="Quach H.L."/>
            <person name="Tripp M."/>
            <person name="Chang C.H."/>
            <person name="Lee J.M."/>
            <person name="Toriumi M.J."/>
            <person name="Chan M.M."/>
            <person name="Tang C.C."/>
            <person name="Onodera C.S."/>
            <person name="Deng J.M."/>
            <person name="Akiyama K."/>
            <person name="Ansari Y."/>
            <person name="Arakawa T."/>
            <person name="Banh J."/>
            <person name="Banno F."/>
            <person name="Bowser L."/>
            <person name="Brooks S.Y."/>
            <person name="Carninci P."/>
            <person name="Chao Q."/>
            <person name="Choy N."/>
            <person name="Enju A."/>
            <person name="Goldsmith A.D."/>
            <person name="Gurjal M."/>
            <person name="Hansen N.F."/>
            <person name="Hayashizaki Y."/>
            <person name="Johnson-Hopson C."/>
            <person name="Hsuan V.W."/>
            <person name="Iida K."/>
            <person name="Karnes M."/>
            <person name="Khan S."/>
            <person name="Koesema E."/>
            <person name="Ishida J."/>
            <person name="Jiang P.X."/>
            <person name="Jones T."/>
            <person name="Kawai J."/>
            <person name="Kamiya A."/>
            <person name="Meyers C."/>
            <person name="Nakajima M."/>
            <person name="Narusaka M."/>
            <person name="Seki M."/>
            <person name="Sakurai T."/>
            <person name="Satou M."/>
            <person name="Tamse R."/>
            <person name="Vaysberg M."/>
            <person name="Wallender E.K."/>
            <person name="Wong C."/>
            <person name="Yamamura Y."/>
            <person name="Yuan S."/>
            <person name="Shinozaki K."/>
            <person name="Davis R.W."/>
            <person name="Theologis A."/>
            <person name="Ecker J.R."/>
        </authorList>
    </citation>
    <scope>NUCLEOTIDE SEQUENCE [LARGE SCALE MRNA]</scope>
    <source>
        <strain>cv. Columbia</strain>
    </source>
</reference>
<reference key="4">
    <citation type="journal article" date="2008" name="Chem. Biol.">
        <title>In planta biocatalysis screen of P450s identifies 8-methoxypsoralen as a substrate for the CYP82C subfamily, yielding original chemical structures.</title>
        <authorList>
            <person name="Kruse T."/>
            <person name="Ho K."/>
            <person name="Yoo H.D."/>
            <person name="Johnson T."/>
            <person name="Hippely M."/>
            <person name="Park J.H."/>
            <person name="Flavell R."/>
            <person name="Bobzin S."/>
        </authorList>
    </citation>
    <scope>FUNCTION</scope>
    <scope>CATALYTIC ACTIVITY</scope>
</reference>
<reference key="5">
    <citation type="journal article" date="2011" name="J. Plant Physiol.">
        <title>Arabidopsis CYP82C4 expression is dependent on Fe availability and circadian rhythm, and correlates with genes involved in the early Fe deficiency response.</title>
        <authorList>
            <person name="Murgia I."/>
            <person name="Tarantino D."/>
            <person name="Soave C."/>
            <person name="Morandini P."/>
        </authorList>
    </citation>
    <scope>FUNCTION</scope>
    <scope>INDUCTION</scope>
    <scope>DISRUPTION PHENOTYPE</scope>
</reference>
<reference key="6">
    <citation type="journal article" date="2018" name="Nat. Chem. Biol.">
        <title>Biosynthesis of redox-active metabolites in response to iron deficiency in plants.</title>
        <authorList>
            <person name="Rajniak J."/>
            <person name="Giehl R.F.H."/>
            <person name="Chang E."/>
            <person name="Murgia I."/>
            <person name="von Wiren N."/>
            <person name="Sattely E.S."/>
        </authorList>
    </citation>
    <scope>FUNCTION</scope>
    <scope>DISRUPTION PHENOTYPE</scope>
    <scope>CATALYTIC ACTIVITY</scope>
    <scope>INDUCTION BY IRON-DEFICIENCY</scope>
    <scope>PATHWAY</scope>
    <scope>TISSUE SPECIFICITY</scope>
    <source>
        <strain>cv. Columbia</strain>
    </source>
</reference>
<dbReference type="EC" id="1.14.14.-" evidence="4"/>
<dbReference type="EC" id="1.14.14.164" evidence="6"/>
<dbReference type="EMBL" id="AL021636">
    <property type="protein sequence ID" value="CAA16595.1"/>
    <property type="molecule type" value="Genomic_DNA"/>
</dbReference>
<dbReference type="EMBL" id="AL161580">
    <property type="protein sequence ID" value="CAB79912.1"/>
    <property type="molecule type" value="Genomic_DNA"/>
</dbReference>
<dbReference type="EMBL" id="CP002687">
    <property type="protein sequence ID" value="AEE85981.1"/>
    <property type="molecule type" value="Genomic_DNA"/>
</dbReference>
<dbReference type="EMBL" id="AY090995">
    <property type="status" value="NOT_ANNOTATED_CDS"/>
    <property type="molecule type" value="mRNA"/>
</dbReference>
<dbReference type="PIR" id="T04651">
    <property type="entry name" value="T04651"/>
</dbReference>
<dbReference type="RefSeq" id="NP_194922.1">
    <property type="nucleotide sequence ID" value="NM_119345.3"/>
</dbReference>
<dbReference type="SMR" id="Q9SZ46"/>
<dbReference type="FunCoup" id="Q9SZ46">
    <property type="interactions" value="388"/>
</dbReference>
<dbReference type="STRING" id="3702.Q9SZ46"/>
<dbReference type="iPTMnet" id="Q9SZ46"/>
<dbReference type="PaxDb" id="3702-AT4G31940.1"/>
<dbReference type="ProteomicsDB" id="239210"/>
<dbReference type="EnsemblPlants" id="AT4G31940.1">
    <property type="protein sequence ID" value="AT4G31940.1"/>
    <property type="gene ID" value="AT4G31940"/>
</dbReference>
<dbReference type="GeneID" id="829324"/>
<dbReference type="Gramene" id="AT4G31940.1">
    <property type="protein sequence ID" value="AT4G31940.1"/>
    <property type="gene ID" value="AT4G31940"/>
</dbReference>
<dbReference type="KEGG" id="ath:AT4G31940"/>
<dbReference type="Araport" id="AT4G31940"/>
<dbReference type="TAIR" id="AT4G31940">
    <property type="gene designation" value="CYP82C4"/>
</dbReference>
<dbReference type="eggNOG" id="KOG0156">
    <property type="taxonomic scope" value="Eukaryota"/>
</dbReference>
<dbReference type="HOGENOM" id="CLU_001570_4_0_1"/>
<dbReference type="InParanoid" id="Q9SZ46"/>
<dbReference type="OMA" id="VVELNRW"/>
<dbReference type="PhylomeDB" id="Q9SZ46"/>
<dbReference type="BioCyc" id="ARA:AT4G31940-MONOMER"/>
<dbReference type="BioCyc" id="MetaCyc:AT4G31940-MONOMER"/>
<dbReference type="BRENDA" id="1.14.14.164">
    <property type="organism ID" value="399"/>
</dbReference>
<dbReference type="PRO" id="PR:Q9SZ46"/>
<dbReference type="Proteomes" id="UP000006548">
    <property type="component" value="Chromosome 4"/>
</dbReference>
<dbReference type="ExpressionAtlas" id="Q9SZ46">
    <property type="expression patterns" value="baseline and differential"/>
</dbReference>
<dbReference type="GO" id="GO:0016020">
    <property type="term" value="C:membrane"/>
    <property type="evidence" value="ECO:0007669"/>
    <property type="project" value="UniProtKB-SubCell"/>
</dbReference>
<dbReference type="GO" id="GO:0106144">
    <property type="term" value="F:fraxetin 5-hydroxylase activity"/>
    <property type="evidence" value="ECO:0000314"/>
    <property type="project" value="TAIR"/>
</dbReference>
<dbReference type="GO" id="GO:0020037">
    <property type="term" value="F:heme binding"/>
    <property type="evidence" value="ECO:0007669"/>
    <property type="project" value="InterPro"/>
</dbReference>
<dbReference type="GO" id="GO:0005506">
    <property type="term" value="F:iron ion binding"/>
    <property type="evidence" value="ECO:0007669"/>
    <property type="project" value="InterPro"/>
</dbReference>
<dbReference type="GO" id="GO:0004497">
    <property type="term" value="F:monooxygenase activity"/>
    <property type="evidence" value="ECO:0000314"/>
    <property type="project" value="UniProtKB"/>
</dbReference>
<dbReference type="GO" id="GO:0071281">
    <property type="term" value="P:cellular response to iron ion"/>
    <property type="evidence" value="ECO:0000270"/>
    <property type="project" value="TAIR"/>
</dbReference>
<dbReference type="GO" id="GO:0010039">
    <property type="term" value="P:response to iron ion"/>
    <property type="evidence" value="ECO:0000270"/>
    <property type="project" value="TAIR"/>
</dbReference>
<dbReference type="GO" id="GO:0106146">
    <property type="term" value="P:sideretin biosynthesis"/>
    <property type="evidence" value="ECO:0000314"/>
    <property type="project" value="TAIR"/>
</dbReference>
<dbReference type="CDD" id="cd20654">
    <property type="entry name" value="CYP82"/>
    <property type="match status" value="1"/>
</dbReference>
<dbReference type="FunFam" id="1.10.630.10:FF:000026">
    <property type="entry name" value="Cytochrome P450 82C4"/>
    <property type="match status" value="1"/>
</dbReference>
<dbReference type="Gene3D" id="1.10.630.10">
    <property type="entry name" value="Cytochrome P450"/>
    <property type="match status" value="1"/>
</dbReference>
<dbReference type="InterPro" id="IPR001128">
    <property type="entry name" value="Cyt_P450"/>
</dbReference>
<dbReference type="InterPro" id="IPR017972">
    <property type="entry name" value="Cyt_P450_CS"/>
</dbReference>
<dbReference type="InterPro" id="IPR002401">
    <property type="entry name" value="Cyt_P450_E_grp-I"/>
</dbReference>
<dbReference type="InterPro" id="IPR036396">
    <property type="entry name" value="Cyt_P450_sf"/>
</dbReference>
<dbReference type="InterPro" id="IPR050651">
    <property type="entry name" value="Plant_Cytochrome_P450_Monoox"/>
</dbReference>
<dbReference type="PANTHER" id="PTHR47947">
    <property type="entry name" value="CYTOCHROME P450 82C3-RELATED"/>
    <property type="match status" value="1"/>
</dbReference>
<dbReference type="PANTHER" id="PTHR47947:SF19">
    <property type="entry name" value="CYTOCHROME P450 82C3-RELATED"/>
    <property type="match status" value="1"/>
</dbReference>
<dbReference type="Pfam" id="PF00067">
    <property type="entry name" value="p450"/>
    <property type="match status" value="1"/>
</dbReference>
<dbReference type="PRINTS" id="PR00463">
    <property type="entry name" value="EP450I"/>
</dbReference>
<dbReference type="PRINTS" id="PR00385">
    <property type="entry name" value="P450"/>
</dbReference>
<dbReference type="SUPFAM" id="SSF48264">
    <property type="entry name" value="Cytochrome P450"/>
    <property type="match status" value="1"/>
</dbReference>
<dbReference type="PROSITE" id="PS00086">
    <property type="entry name" value="CYTOCHROME_P450"/>
    <property type="match status" value="1"/>
</dbReference>
<sequence>MDTSLFSLFVPILVFVFIALFKKSKKPKYVKAPAPSGAWPIIGHLHLLGGKEQLLYRTLGKMADHYGPAMSLQLGSNEAFVVSSFEVAKDCFTVNDKALASRPMTAAAKHMGYNFAVFGFAPYSAFWREMRKIATIELLSNRRLQMLKHVRVSEITMGVKDLYSLWFKNGGTKPVMVDLKSWLEDMTLNMIVRMVAGKRYFGGGGSVSSEDTEEAMQCKKAIAKFFHLIGIFTVSDAFPTLSFFDLQGHEKEMKQTGSELDVILERWIENHRQQRKFSGTKENDSDFIDVMMSLAEQGKLSHLQYDANTSIKSTCLALILGGSDTSASTLTWAISLLLNNKEMLKKAQDEIDIHVGRDRNVEDSDIENLVYLQAIIKETLRLYPAGPLLGPREAMEDCTVAGYYVPCGTRLIVNVWKIQRDPKVYMEPNEFRPERFITGEAKEFDVRGQNFELMPFGSGRRSCPGSSLAMQVLHLGLARFLHSFDVKTVMDMPVDMSENPGLTIPKATPLEVLISPRIKEELFV</sequence>
<name>C82C4_ARATH</name>
<keyword id="KW-0349">Heme</keyword>
<keyword id="KW-0408">Iron</keyword>
<keyword id="KW-0472">Membrane</keyword>
<keyword id="KW-0479">Metal-binding</keyword>
<keyword id="KW-0503">Monooxygenase</keyword>
<keyword id="KW-0560">Oxidoreductase</keyword>
<keyword id="KW-1185">Reference proteome</keyword>
<keyword id="KW-0812">Transmembrane</keyword>
<keyword id="KW-1133">Transmembrane helix</keyword>
<proteinExistence type="evidence at protein level"/>
<comment type="function">
    <text evidence="4 5 6">Can hydroxylate xanthotoxin (8-methoxypsoralen) to form 5-hydroxyxanthotoxin (5-hydroxy-8-methoxypsoralen) in vivo and in vitro (PubMed:18291319). Involved in the early iron deficiency response, possibly through an IDE1-like mediated pathway (PubMed:21315474). Involved in the pathway of sideretin biosynthesis from feruloyl CoA, a redox-active catecholic metabolite exuded by roots in response to iron deficiency in order to facilitate the uptake of iron; this pathway consists in the successive conversion from feruloyl CoA to scopoletin, from scopoletin to fraxetin and from fraxetin to sideretin (PubMed:29581584). Catalyzes the biosynthesis of sideretin via fraxetin hydroxylation (PubMed:29581584).</text>
</comment>
<comment type="catalytic activity">
    <reaction evidence="6">
        <text>fraxetin + reduced [NADPH--hemoprotein reductase] + O2 = sideretin (reduced form) + oxidized [NADPH--hemoprotein reductase] + H2O + H(+)</text>
        <dbReference type="Rhea" id="RHEA:57844"/>
        <dbReference type="Rhea" id="RHEA-COMP:11964"/>
        <dbReference type="Rhea" id="RHEA-COMP:11965"/>
        <dbReference type="ChEBI" id="CHEBI:5169"/>
        <dbReference type="ChEBI" id="CHEBI:15377"/>
        <dbReference type="ChEBI" id="CHEBI:15378"/>
        <dbReference type="ChEBI" id="CHEBI:15379"/>
        <dbReference type="ChEBI" id="CHEBI:57618"/>
        <dbReference type="ChEBI" id="CHEBI:58210"/>
        <dbReference type="ChEBI" id="CHEBI:142095"/>
        <dbReference type="EC" id="1.14.14.164"/>
    </reaction>
    <physiologicalReaction direction="left-to-right" evidence="6">
        <dbReference type="Rhea" id="RHEA:57845"/>
    </physiologicalReaction>
</comment>
<comment type="catalytic activity">
    <reaction evidence="4">
        <text>xanthotoxin + reduced [NADPH--hemoprotein reductase] + O2 = 5-hydroxyxanthotoxin + oxidized [NADPH--hemoprotein reductase] + H2O + 2 H(+)</text>
        <dbReference type="Rhea" id="RHEA:58064"/>
        <dbReference type="Rhea" id="RHEA-COMP:11964"/>
        <dbReference type="Rhea" id="RHEA-COMP:11965"/>
        <dbReference type="ChEBI" id="CHEBI:15377"/>
        <dbReference type="ChEBI" id="CHEBI:15378"/>
        <dbReference type="ChEBI" id="CHEBI:15379"/>
        <dbReference type="ChEBI" id="CHEBI:18358"/>
        <dbReference type="ChEBI" id="CHEBI:57618"/>
        <dbReference type="ChEBI" id="CHEBI:58210"/>
        <dbReference type="ChEBI" id="CHEBI:78326"/>
    </reaction>
</comment>
<comment type="cofactor">
    <cofactor evidence="1">
        <name>heme</name>
        <dbReference type="ChEBI" id="CHEBI:30413"/>
    </cofactor>
</comment>
<comment type="pathway">
    <text evidence="6">Phenylpropanoid metabolism.</text>
</comment>
<comment type="subcellular location">
    <subcellularLocation>
        <location evidence="9">Membrane</location>
        <topology evidence="9">Single-pass membrane protein</topology>
    </subcellularLocation>
</comment>
<comment type="tissue specificity">
    <text evidence="6">Expressed in both primary and lateral roots under iron-deficient conditions, except in apical root zones, and mostly in the root epidermal layer.</text>
</comment>
<comment type="induction">
    <text evidence="5 6">By iron deficiency, mainly in roots.</text>
</comment>
<comment type="disruption phenotype">
    <text evidence="5 6">Increased root length at seedling stage (PubMed:21315474). Accumulation of fraxetin, but loss of sideretin root secretion in response to iron deficiency. Slightly increased iron-uptake ability at elevated pH leading to a better fitness of plants, due to the presence of high fraxetin content (PubMed:29581584).</text>
</comment>
<comment type="miscellaneous">
    <text>Plants overexpressing CYP82C4, can hydroxylate and subsequently glycosylate 8-methoxypsoralen.</text>
</comment>
<comment type="similarity">
    <text evidence="9">Belongs to the cytochrome P450 family.</text>
</comment>
<comment type="sequence caution" evidence="9">
    <conflict type="frameshift">
        <sequence resource="EMBL" id="AY090995"/>
    </conflict>
</comment>
<evidence type="ECO:0000250" key="1"/>
<evidence type="ECO:0000250" key="2">
    <source>
        <dbReference type="UniProtKB" id="P04798"/>
    </source>
</evidence>
<evidence type="ECO:0000255" key="3"/>
<evidence type="ECO:0000269" key="4">
    <source>
    </source>
</evidence>
<evidence type="ECO:0000269" key="5">
    <source>
    </source>
</evidence>
<evidence type="ECO:0000269" key="6">
    <source>
    </source>
</evidence>
<evidence type="ECO:0000303" key="7">
    <source>
    </source>
</evidence>
<evidence type="ECO:0000303" key="8">
    <source>
    </source>
</evidence>
<evidence type="ECO:0000305" key="9"/>
<evidence type="ECO:0000305" key="10">
    <source>
    </source>
</evidence>
<evidence type="ECO:0000305" key="11">
    <source>
    </source>
</evidence>
<evidence type="ECO:0000312" key="12">
    <source>
        <dbReference type="Araport" id="AT4G31940"/>
    </source>
</evidence>
<evidence type="ECO:0000312" key="13">
    <source>
        <dbReference type="EMBL" id="CAA16595.1"/>
    </source>
</evidence>